<evidence type="ECO:0000255" key="1">
    <source>
        <dbReference type="HAMAP-Rule" id="MF_01623"/>
    </source>
</evidence>
<evidence type="ECO:0000256" key="2">
    <source>
        <dbReference type="SAM" id="MobiDB-lite"/>
    </source>
</evidence>
<name>MEPA_SHIDS</name>
<dbReference type="EC" id="3.4.24.-" evidence="1"/>
<dbReference type="EMBL" id="CP000034">
    <property type="protein sequence ID" value="ABB62596.1"/>
    <property type="molecule type" value="Genomic_DNA"/>
</dbReference>
<dbReference type="RefSeq" id="WP_001043835.1">
    <property type="nucleotide sequence ID" value="NC_007606.1"/>
</dbReference>
<dbReference type="RefSeq" id="YP_404087.1">
    <property type="nucleotide sequence ID" value="NC_007606.1"/>
</dbReference>
<dbReference type="SMR" id="Q32DK9"/>
<dbReference type="STRING" id="300267.SDY_2527"/>
<dbReference type="MEROPS" id="M74.001"/>
<dbReference type="EnsemblBacteria" id="ABB62596">
    <property type="protein sequence ID" value="ABB62596"/>
    <property type="gene ID" value="SDY_2527"/>
</dbReference>
<dbReference type="KEGG" id="sdy:SDY_2527"/>
<dbReference type="PATRIC" id="fig|300267.13.peg.3043"/>
<dbReference type="HOGENOM" id="CLU_052496_0_0_6"/>
<dbReference type="Proteomes" id="UP000002716">
    <property type="component" value="Chromosome"/>
</dbReference>
<dbReference type="GO" id="GO:0030288">
    <property type="term" value="C:outer membrane-bounded periplasmic space"/>
    <property type="evidence" value="ECO:0007669"/>
    <property type="project" value="InterPro"/>
</dbReference>
<dbReference type="GO" id="GO:0046872">
    <property type="term" value="F:metal ion binding"/>
    <property type="evidence" value="ECO:0007669"/>
    <property type="project" value="UniProtKB-KW"/>
</dbReference>
<dbReference type="GO" id="GO:0004222">
    <property type="term" value="F:metalloendopeptidase activity"/>
    <property type="evidence" value="ECO:0007669"/>
    <property type="project" value="UniProtKB-UniRule"/>
</dbReference>
<dbReference type="GO" id="GO:0004252">
    <property type="term" value="F:serine-type endopeptidase activity"/>
    <property type="evidence" value="ECO:0007669"/>
    <property type="project" value="InterPro"/>
</dbReference>
<dbReference type="GO" id="GO:0000270">
    <property type="term" value="P:peptidoglycan metabolic process"/>
    <property type="evidence" value="ECO:0007669"/>
    <property type="project" value="UniProtKB-UniRule"/>
</dbReference>
<dbReference type="GO" id="GO:0006508">
    <property type="term" value="P:proteolysis"/>
    <property type="evidence" value="ECO:0007669"/>
    <property type="project" value="UniProtKB-KW"/>
</dbReference>
<dbReference type="FunFam" id="3.30.1380.10:FF:000002">
    <property type="entry name" value="Penicillin-insensitive murein endopeptidase"/>
    <property type="match status" value="1"/>
</dbReference>
<dbReference type="Gene3D" id="3.30.1380.10">
    <property type="match status" value="1"/>
</dbReference>
<dbReference type="HAMAP" id="MF_01623">
    <property type="entry name" value="MepA"/>
    <property type="match status" value="1"/>
</dbReference>
<dbReference type="InterPro" id="IPR009045">
    <property type="entry name" value="Hedgehog_sig/DD-Pept_Zn-bd_sf"/>
</dbReference>
<dbReference type="InterPro" id="IPR005073">
    <property type="entry name" value="Peptidase_M74"/>
</dbReference>
<dbReference type="NCBIfam" id="NF006947">
    <property type="entry name" value="PRK09429.1"/>
    <property type="match status" value="1"/>
</dbReference>
<dbReference type="Pfam" id="PF03411">
    <property type="entry name" value="Peptidase_M74"/>
    <property type="match status" value="1"/>
</dbReference>
<dbReference type="PIRSF" id="PIRSF018455">
    <property type="entry name" value="MepA"/>
    <property type="match status" value="1"/>
</dbReference>
<dbReference type="SUPFAM" id="SSF55166">
    <property type="entry name" value="Hedgehog/DD-peptidase"/>
    <property type="match status" value="1"/>
</dbReference>
<reference key="1">
    <citation type="journal article" date="2005" name="Nucleic Acids Res.">
        <title>Genome dynamics and diversity of Shigella species, the etiologic agents of bacillary dysentery.</title>
        <authorList>
            <person name="Yang F."/>
            <person name="Yang J."/>
            <person name="Zhang X."/>
            <person name="Chen L."/>
            <person name="Jiang Y."/>
            <person name="Yan Y."/>
            <person name="Tang X."/>
            <person name="Wang J."/>
            <person name="Xiong Z."/>
            <person name="Dong J."/>
            <person name="Xue Y."/>
            <person name="Zhu Y."/>
            <person name="Xu X."/>
            <person name="Sun L."/>
            <person name="Chen S."/>
            <person name="Nie H."/>
            <person name="Peng J."/>
            <person name="Xu J."/>
            <person name="Wang Y."/>
            <person name="Yuan Z."/>
            <person name="Wen Y."/>
            <person name="Yao Z."/>
            <person name="Shen Y."/>
            <person name="Qiang B."/>
            <person name="Hou Y."/>
            <person name="Yu J."/>
            <person name="Jin Q."/>
        </authorList>
    </citation>
    <scope>NUCLEOTIDE SEQUENCE [LARGE SCALE GENOMIC DNA]</scope>
    <source>
        <strain>Sd197</strain>
    </source>
</reference>
<proteinExistence type="inferred from homology"/>
<sequence>MNKTAIALLALLASSVSLAATPWQKITQPVPGSAQSIGSFSNGCIVGADTLPIQSEHYQVMRTDQRRYFGHPDLVMFIQRLSSQVSNLGMGTVLIGDMGMPAGGRFNGGHASHQTGLDVDIFLQLPKTRWTSAQLLRPQALDLVSRDGKHVVSTLWKPEIFSLIKLAAQDKDVTRIFVNPAIKQQLCLDAGTDRDWLRKVRPWFQHRAHMHVRLRCPADSLECEDQPLPPPGDGCGAELQSWFEPPKPGTTKPEKKTPPPLPPSCQALLDEHVI</sequence>
<accession>Q32DK9</accession>
<comment type="function">
    <text evidence="1">Murein endopeptidase that cleaves the D-alanyl-meso-2,6-diamino-pimelyl amide bond that connects peptidoglycan strands. Likely plays a role in the removal of murein from the sacculus.</text>
</comment>
<comment type="cofactor">
    <cofactor evidence="1">
        <name>Zn(2+)</name>
        <dbReference type="ChEBI" id="CHEBI:29105"/>
    </cofactor>
    <text evidence="1">Binds 2 Zn(2+) ions per subunit. Zn(2+) ion 1 is bound in the active site. Zn(2+) ion 2 is bound at the dimer interface by residues from both subunits.</text>
</comment>
<comment type="subunit">
    <text evidence="1">Dimer.</text>
</comment>
<comment type="subcellular location">
    <subcellularLocation>
        <location evidence="1">Periplasm</location>
    </subcellularLocation>
</comment>
<comment type="similarity">
    <text evidence="1">Belongs to the peptidase M74 family.</text>
</comment>
<protein>
    <recommendedName>
        <fullName evidence="1">Penicillin-insensitive murein endopeptidase</fullName>
        <ecNumber evidence="1">3.4.24.-</ecNumber>
    </recommendedName>
    <alternativeName>
        <fullName evidence="1">D-alanyl-D-alanine-endopeptidase</fullName>
        <shortName evidence="1">DD-endopeptidase</shortName>
    </alternativeName>
</protein>
<gene>
    <name evidence="1" type="primary">mepA</name>
    <name type="ordered locus">SDY_2527</name>
</gene>
<organism>
    <name type="scientific">Shigella dysenteriae serotype 1 (strain Sd197)</name>
    <dbReference type="NCBI Taxonomy" id="300267"/>
    <lineage>
        <taxon>Bacteria</taxon>
        <taxon>Pseudomonadati</taxon>
        <taxon>Pseudomonadota</taxon>
        <taxon>Gammaproteobacteria</taxon>
        <taxon>Enterobacterales</taxon>
        <taxon>Enterobacteriaceae</taxon>
        <taxon>Shigella</taxon>
    </lineage>
</organism>
<keyword id="KW-1015">Disulfide bond</keyword>
<keyword id="KW-0378">Hydrolase</keyword>
<keyword id="KW-0479">Metal-binding</keyword>
<keyword id="KW-0482">Metalloprotease</keyword>
<keyword id="KW-0574">Periplasm</keyword>
<keyword id="KW-0645">Protease</keyword>
<keyword id="KW-1185">Reference proteome</keyword>
<keyword id="KW-0732">Signal</keyword>
<keyword id="KW-0862">Zinc</keyword>
<feature type="signal peptide" evidence="1">
    <location>
        <begin position="1"/>
        <end position="19"/>
    </location>
</feature>
<feature type="chain" id="PRO_0000292557" description="Penicillin-insensitive murein endopeptidase">
    <location>
        <begin position="20"/>
        <end position="274"/>
    </location>
</feature>
<feature type="region of interest" description="Disordered" evidence="2">
    <location>
        <begin position="227"/>
        <end position="274"/>
    </location>
</feature>
<feature type="binding site" evidence="1">
    <location>
        <position position="110"/>
    </location>
    <ligand>
        <name>Zn(2+)</name>
        <dbReference type="ChEBI" id="CHEBI:29105"/>
        <label>1</label>
    </ligand>
</feature>
<feature type="binding site" evidence="1">
    <location>
        <position position="113"/>
    </location>
    <ligand>
        <name>Zn(2+)</name>
        <dbReference type="ChEBI" id="CHEBI:29105"/>
        <label>1</label>
    </ligand>
</feature>
<feature type="binding site" evidence="1">
    <location>
        <position position="120"/>
    </location>
    <ligand>
        <name>Zn(2+)</name>
        <dbReference type="ChEBI" id="CHEBI:29105"/>
        <label>1</label>
    </ligand>
</feature>
<feature type="binding site" evidence="1">
    <location>
        <position position="147"/>
    </location>
    <ligand>
        <name>Zn(2+)</name>
        <dbReference type="ChEBI" id="CHEBI:29105"/>
        <label>2</label>
    </ligand>
</feature>
<feature type="binding site" evidence="1">
    <location>
        <position position="150"/>
    </location>
    <ligand>
        <name>Zn(2+)</name>
        <dbReference type="ChEBI" id="CHEBI:29105"/>
        <label>2</label>
    </ligand>
</feature>
<feature type="binding site" evidence="1">
    <location>
        <position position="211"/>
    </location>
    <ligand>
        <name>Zn(2+)</name>
        <dbReference type="ChEBI" id="CHEBI:29105"/>
        <label>1</label>
    </ligand>
</feature>
<feature type="disulfide bond" evidence="1">
    <location>
        <begin position="44"/>
        <end position="265"/>
    </location>
</feature>
<feature type="disulfide bond" evidence="1">
    <location>
        <begin position="187"/>
        <end position="235"/>
    </location>
</feature>
<feature type="disulfide bond" evidence="1">
    <location>
        <begin position="216"/>
        <end position="223"/>
    </location>
</feature>